<feature type="chain" id="PRO_0000433193" description="Nucleoporin SEH1">
    <location>
        <begin position="1"/>
        <end position="538"/>
    </location>
</feature>
<feature type="repeat" description="WD 1" evidence="2">
    <location>
        <begin position="27"/>
        <end position="66"/>
    </location>
</feature>
<feature type="repeat" description="WD 2" evidence="2">
    <location>
        <begin position="72"/>
        <end position="114"/>
    </location>
</feature>
<feature type="repeat" description="WD 3" evidence="2">
    <location>
        <begin position="191"/>
        <end position="234"/>
    </location>
</feature>
<feature type="repeat" description="WD 4" evidence="2">
    <location>
        <begin position="260"/>
        <end position="313"/>
    </location>
</feature>
<feature type="repeat" description="WD 5" evidence="2">
    <location>
        <begin position="332"/>
        <end position="375"/>
    </location>
</feature>
<feature type="repeat" description="WD 6" evidence="2">
    <location>
        <begin position="484"/>
        <end position="523"/>
    </location>
</feature>
<feature type="region of interest" description="Disordered" evidence="3">
    <location>
        <begin position="110"/>
        <end position="200"/>
    </location>
</feature>
<feature type="region of interest" description="Disordered" evidence="3">
    <location>
        <begin position="374"/>
        <end position="431"/>
    </location>
</feature>
<feature type="compositionally biased region" description="Low complexity" evidence="3">
    <location>
        <begin position="129"/>
        <end position="149"/>
    </location>
</feature>
<dbReference type="EMBL" id="GL988041">
    <property type="protein sequence ID" value="EGS21224.1"/>
    <property type="molecule type" value="Genomic_DNA"/>
</dbReference>
<dbReference type="EMBL" id="JF276294">
    <property type="protein sequence ID" value="AEL00688.1"/>
    <property type="molecule type" value="Genomic_DNA"/>
</dbReference>
<dbReference type="RefSeq" id="XP_006693520.1">
    <property type="nucleotide sequence ID" value="XM_006693457.1"/>
</dbReference>
<dbReference type="STRING" id="759272.G0S450"/>
<dbReference type="TCDB" id="1.I.1.1.2">
    <property type="family name" value="the nuclear pore complex (npc) family"/>
</dbReference>
<dbReference type="GeneID" id="18257109"/>
<dbReference type="KEGG" id="cthr:CTHT_0030710"/>
<dbReference type="eggNOG" id="KOG2445">
    <property type="taxonomic scope" value="Eukaryota"/>
</dbReference>
<dbReference type="HOGENOM" id="CLU_032441_5_0_1"/>
<dbReference type="OMA" id="WFRLWAE"/>
<dbReference type="OrthoDB" id="5566198at2759"/>
<dbReference type="Proteomes" id="UP000008066">
    <property type="component" value="Unassembled WGS sequence"/>
</dbReference>
<dbReference type="GO" id="GO:0031965">
    <property type="term" value="C:nuclear membrane"/>
    <property type="evidence" value="ECO:0007669"/>
    <property type="project" value="UniProtKB-SubCell"/>
</dbReference>
<dbReference type="GO" id="GO:0031080">
    <property type="term" value="C:nuclear pore outer ring"/>
    <property type="evidence" value="ECO:0007669"/>
    <property type="project" value="TreeGrafter"/>
</dbReference>
<dbReference type="GO" id="GO:0035859">
    <property type="term" value="C:Seh1-associated complex"/>
    <property type="evidence" value="ECO:0007669"/>
    <property type="project" value="TreeGrafter"/>
</dbReference>
<dbReference type="GO" id="GO:0005198">
    <property type="term" value="F:structural molecule activity"/>
    <property type="evidence" value="ECO:0007669"/>
    <property type="project" value="InterPro"/>
</dbReference>
<dbReference type="GO" id="GO:0034198">
    <property type="term" value="P:cellular response to amino acid starvation"/>
    <property type="evidence" value="ECO:0007669"/>
    <property type="project" value="TreeGrafter"/>
</dbReference>
<dbReference type="GO" id="GO:0051028">
    <property type="term" value="P:mRNA transport"/>
    <property type="evidence" value="ECO:0007669"/>
    <property type="project" value="UniProtKB-KW"/>
</dbReference>
<dbReference type="GO" id="GO:1904263">
    <property type="term" value="P:positive regulation of TORC1 signaling"/>
    <property type="evidence" value="ECO:0007669"/>
    <property type="project" value="TreeGrafter"/>
</dbReference>
<dbReference type="GO" id="GO:0015031">
    <property type="term" value="P:protein transport"/>
    <property type="evidence" value="ECO:0007669"/>
    <property type="project" value="UniProtKB-KW"/>
</dbReference>
<dbReference type="Gene3D" id="2.130.10.10">
    <property type="entry name" value="YVTN repeat-like/Quinoprotein amine dehydrogenase"/>
    <property type="match status" value="1"/>
</dbReference>
<dbReference type="InterPro" id="IPR037363">
    <property type="entry name" value="Sec13/Seh1_fam"/>
</dbReference>
<dbReference type="InterPro" id="IPR015943">
    <property type="entry name" value="WD40/YVTN_repeat-like_dom_sf"/>
</dbReference>
<dbReference type="InterPro" id="IPR036322">
    <property type="entry name" value="WD40_repeat_dom_sf"/>
</dbReference>
<dbReference type="InterPro" id="IPR001680">
    <property type="entry name" value="WD40_rpt"/>
</dbReference>
<dbReference type="PANTHER" id="PTHR11024">
    <property type="entry name" value="NUCLEAR PORE COMPLEX PROTEIN SEC13 / SEH1 FAMILY MEMBER"/>
    <property type="match status" value="1"/>
</dbReference>
<dbReference type="PANTHER" id="PTHR11024:SF3">
    <property type="entry name" value="NUCLEOPORIN SEH1"/>
    <property type="match status" value="1"/>
</dbReference>
<dbReference type="Pfam" id="PF00400">
    <property type="entry name" value="WD40"/>
    <property type="match status" value="2"/>
</dbReference>
<dbReference type="SMART" id="SM00320">
    <property type="entry name" value="WD40"/>
    <property type="match status" value="4"/>
</dbReference>
<dbReference type="SUPFAM" id="SSF50978">
    <property type="entry name" value="WD40 repeat-like"/>
    <property type="match status" value="1"/>
</dbReference>
<dbReference type="PROSITE" id="PS50082">
    <property type="entry name" value="WD_REPEATS_2"/>
    <property type="match status" value="1"/>
</dbReference>
<dbReference type="PROSITE" id="PS50294">
    <property type="entry name" value="WD_REPEATS_REGION"/>
    <property type="match status" value="1"/>
</dbReference>
<evidence type="ECO:0000250" key="1">
    <source>
        <dbReference type="UniProtKB" id="P53011"/>
    </source>
</evidence>
<evidence type="ECO:0000255" key="2"/>
<evidence type="ECO:0000256" key="3">
    <source>
        <dbReference type="SAM" id="MobiDB-lite"/>
    </source>
</evidence>
<evidence type="ECO:0000303" key="4">
    <source>
    </source>
</evidence>
<evidence type="ECO:0000305" key="5"/>
<evidence type="ECO:0000305" key="6">
    <source>
    </source>
</evidence>
<comment type="function">
    <text evidence="1">Functions as a component of the nuclear pore complex (NPC). NPC components, collectively referred to as nucleoporins (NUPs), can play the role of both NPC structural components and of docking or interaction partners for transiently associated nuclear transport factors. Involved in nuclear poly(A)+ RNA export and NPC biogenesis.</text>
</comment>
<comment type="subunit">
    <text evidence="1 6">Component of the nuclear pore complex (NPC). NPC constitutes the exclusive means of nucleocytoplasmic transport. NPCs allow the passive diffusion of ions and small molecules and the active, nuclear transport receptor-mediated bidirectional transport of macromolecules such as proteins, RNAs, ribonucleoparticles (RNPs), and ribosomal subunits across the nuclear envelope. Due to its 8-fold rotational symmetry, all subunits are present with 8 copies or multiples thereof.</text>
</comment>
<comment type="subcellular location">
    <subcellularLocation>
        <location evidence="1">Nucleus</location>
        <location evidence="1">Nuclear pore complex</location>
    </subcellularLocation>
    <subcellularLocation>
        <location evidence="1">Nucleus membrane</location>
        <topology evidence="1">Peripheral membrane protein</topology>
        <orientation evidence="1">Cytoplasmic side</orientation>
    </subcellularLocation>
    <subcellularLocation>
        <location evidence="1">Nucleus membrane</location>
        <topology evidence="1">Peripheral membrane protein</topology>
        <orientation evidence="1">Nucleoplasmic side</orientation>
    </subcellularLocation>
    <text evidence="1">Symmetric distribution.</text>
</comment>
<comment type="similarity">
    <text evidence="5">Belongs to the WD repeat SEC13 family.</text>
</comment>
<gene>
    <name type="primary">SEH1</name>
    <name type="ORF">CTHT_0030710</name>
</gene>
<protein>
    <recommendedName>
        <fullName evidence="4">Nucleoporin SEH1</fullName>
    </recommendedName>
    <alternativeName>
        <fullName>Nuclear pore protein SEH1</fullName>
    </alternativeName>
</protein>
<proteinExistence type="inferred from homology"/>
<name>SEH1_CHATD</name>
<keyword id="KW-0472">Membrane</keyword>
<keyword id="KW-0509">mRNA transport</keyword>
<keyword id="KW-0906">Nuclear pore complex</keyword>
<keyword id="KW-0539">Nucleus</keyword>
<keyword id="KW-0653">Protein transport</keyword>
<keyword id="KW-1185">Reference proteome</keyword>
<keyword id="KW-0677">Repeat</keyword>
<keyword id="KW-0811">Translocation</keyword>
<keyword id="KW-0813">Transport</keyword>
<keyword id="KW-0853">WD repeat</keyword>
<reference key="1">
    <citation type="journal article" date="2011" name="Cell">
        <title>Insight into structure and assembly of the nuclear pore complex by utilizing the genome of a eukaryotic thermophile.</title>
        <authorList>
            <person name="Amlacher S."/>
            <person name="Sarges P."/>
            <person name="Flemming D."/>
            <person name="van Noort V."/>
            <person name="Kunze R."/>
            <person name="Devos D.P."/>
            <person name="Arumugam M."/>
            <person name="Bork P."/>
            <person name="Hurt E."/>
        </authorList>
    </citation>
    <scope>NUCLEOTIDE SEQUENCE [LARGE SCALE GENOMIC DNA]</scope>
    <source>
        <strain>DSM 1495 / CBS 144.50 / IMI 039719</strain>
    </source>
</reference>
<organism>
    <name type="scientific">Chaetomium thermophilum (strain DSM 1495 / CBS 144.50 / IMI 039719)</name>
    <name type="common">Thermochaetoides thermophila</name>
    <dbReference type="NCBI Taxonomy" id="759272"/>
    <lineage>
        <taxon>Eukaryota</taxon>
        <taxon>Fungi</taxon>
        <taxon>Dikarya</taxon>
        <taxon>Ascomycota</taxon>
        <taxon>Pezizomycotina</taxon>
        <taxon>Sordariomycetes</taxon>
        <taxon>Sordariomycetidae</taxon>
        <taxon>Sordariales</taxon>
        <taxon>Chaetomiaceae</taxon>
        <taxon>Thermochaetoides</taxon>
    </lineage>
</organism>
<sequence>MSKAAAFLTDPPLVDDRPSFETILKHGHQDLVQAVAFNGHGDRCATGSVDGKIRVFNRLKEGIWRLCDNWTAHAGEILELQWLPTTVYPNLLASLGIEGRFKLWAEDPSAAPGRRFAESTRNGPLITIPSPRLSSHPSHLTHSQHPQQQPHHHHAPESILPSNPPPTSNPPQATGSTTAGSGAKPAFETRNPRSPYRSFSIKHIDDTRTTYLALLSADGGLTVYENDRVENLAAFSLMDEFNVLDPTAATGPGQASTAPRGQETSFRVRFDPNPDVCYTALRDGVLSDALGLVVAVQDTVKVYRTRDAVRASLGLAAATKEFYLAAEVVAGVHRGLVRDVAWAPGNIRGYDIIATACQDGFVRVFRLDTLSPSTSDTTKFAREPSSIDLTQGGELDDEKRAQESAPESRWSSSRVRRHATRRQGPSQDALTITTSGLRASLDSHNHQQTPSRELDAADRRSRRAWTNQPGQVRHTLTEISRLDNHRTPVWRVAFDDDGQILGSVGDEGKLLCYRQKPDGTWAKSSEMSVVKVKMAAPQ</sequence>
<accession>G0S450</accession>
<accession>G0ZGV0</accession>